<evidence type="ECO:0000305" key="1"/>
<reference key="1">
    <citation type="journal article" date="1997" name="Nat. Genet.">
        <title>The mitochondrial genome of Arabidopsis thaliana contains 57 genes in 366,924 nucleotides.</title>
        <authorList>
            <person name="Unseld M."/>
            <person name="Marienfeld J.R."/>
            <person name="Brandt P."/>
            <person name="Brennicke A."/>
        </authorList>
    </citation>
    <scope>NUCLEOTIDE SEQUENCE [LARGE SCALE GENOMIC DNA]</scope>
    <source>
        <strain>cv. C24</strain>
    </source>
</reference>
<reference key="2">
    <citation type="journal article" date="2018" name="Plant Cell">
        <title>Correction of persistent errors in Arabidopsis reference mitochondrial genomes.</title>
        <authorList>
            <person name="Sloan D.B."/>
            <person name="Wu Z."/>
            <person name="Sharbrough J."/>
        </authorList>
    </citation>
    <scope>NUCLEOTIDE SEQUENCE [LARGE SCALE GENOMIC DNA]</scope>
    <source>
        <strain>cv. Columbia</strain>
    </source>
</reference>
<accession>P93276</accession>
<gene>
    <name type="ordered locus">AtMg00030</name>
</gene>
<name>M030_ARATH</name>
<keyword id="KW-0496">Mitochondrion</keyword>
<keyword id="KW-1185">Reference proteome</keyword>
<protein>
    <recommendedName>
        <fullName>Uncharacterized mitochondrial protein AtMg00030</fullName>
    </recommendedName>
    <alternativeName>
        <fullName>ORF107a</fullName>
    </alternativeName>
</protein>
<geneLocation type="mitochondrion"/>
<comment type="subcellular location">
    <subcellularLocation>
        <location evidence="1">Mitochondrion</location>
    </subcellularLocation>
</comment>
<dbReference type="EMBL" id="Y08501">
    <property type="protein sequence ID" value="CAA69780.1"/>
    <property type="molecule type" value="Genomic_DNA"/>
</dbReference>
<dbReference type="EMBL" id="BK010421">
    <property type="status" value="NOT_ANNOTATED_CDS"/>
    <property type="molecule type" value="Genomic_DNA"/>
</dbReference>
<dbReference type="RefSeq" id="NP_085475.1">
    <property type="nucleotide sequence ID" value="NC_001284.2"/>
</dbReference>
<dbReference type="STRING" id="3702.P93276"/>
<dbReference type="PaxDb" id="3702-ATMG00030.1"/>
<dbReference type="EnsemblPlants" id="ATMG00030.1">
    <property type="protein sequence ID" value="ATMG00030.1"/>
    <property type="gene ID" value="ATMG00030"/>
</dbReference>
<dbReference type="Gramene" id="ATMG00030.1">
    <property type="protein sequence ID" value="ATMG00030.1"/>
    <property type="gene ID" value="ATMG00030"/>
</dbReference>
<dbReference type="Araport" id="ATMG00030"/>
<dbReference type="TAIR" id="ATMG00030">
    <property type="gene designation" value="ORF107A"/>
</dbReference>
<dbReference type="eggNOG" id="ENOG502S4RZ">
    <property type="taxonomic scope" value="Eukaryota"/>
</dbReference>
<dbReference type="HOGENOM" id="CLU_2213566_0_0_1"/>
<dbReference type="InParanoid" id="P93276"/>
<dbReference type="PRO" id="PR:P93276"/>
<dbReference type="Proteomes" id="UP000006548">
    <property type="component" value="Mitochondrion MT"/>
</dbReference>
<dbReference type="GO" id="GO:0005739">
    <property type="term" value="C:mitochondrion"/>
    <property type="evidence" value="ECO:0007669"/>
    <property type="project" value="UniProtKB-SubCell"/>
</dbReference>
<dbReference type="InterPro" id="IPR044987">
    <property type="entry name" value="AtMg00030-like"/>
</dbReference>
<dbReference type="PANTHER" id="PTHR37773">
    <property type="entry name" value="TRANSMEMBRANE PROTEIN"/>
    <property type="match status" value="1"/>
</dbReference>
<dbReference type="PANTHER" id="PTHR37773:SF1">
    <property type="entry name" value="TRANSMEMBRANE PROTEIN"/>
    <property type="match status" value="1"/>
</dbReference>
<feature type="chain" id="PRO_0000196753" description="Uncharacterized mitochondrial protein AtMg00030">
    <location>
        <begin position="1"/>
        <end position="107"/>
    </location>
</feature>
<organism>
    <name type="scientific">Arabidopsis thaliana</name>
    <name type="common">Mouse-ear cress</name>
    <dbReference type="NCBI Taxonomy" id="3702"/>
    <lineage>
        <taxon>Eukaryota</taxon>
        <taxon>Viridiplantae</taxon>
        <taxon>Streptophyta</taxon>
        <taxon>Embryophyta</taxon>
        <taxon>Tracheophyta</taxon>
        <taxon>Spermatophyta</taxon>
        <taxon>Magnoliopsida</taxon>
        <taxon>eudicotyledons</taxon>
        <taxon>Gunneridae</taxon>
        <taxon>Pentapetalae</taxon>
        <taxon>rosids</taxon>
        <taxon>malvids</taxon>
        <taxon>Brassicales</taxon>
        <taxon>Brassicaceae</taxon>
        <taxon>Camelineae</taxon>
        <taxon>Arabidopsis</taxon>
    </lineage>
</organism>
<sequence>MFQFAKFSKSKERRLATELGYGFPIGDPWITDGISPWPFASESVLPSQCPGIHPMHSFRSCTQGTLNTTKISMKLTISDCGFEPLTEGFTVLHSTRATTCYHFLFNS</sequence>
<proteinExistence type="predicted"/>